<gene>
    <name evidence="1" type="primary">yeeN</name>
    <name type="ordered locus">SF2054</name>
    <name type="ordered locus">S2161</name>
</gene>
<reference key="1">
    <citation type="journal article" date="2002" name="Nucleic Acids Res.">
        <title>Genome sequence of Shigella flexneri 2a: insights into pathogenicity through comparison with genomes of Escherichia coli K12 and O157.</title>
        <authorList>
            <person name="Jin Q."/>
            <person name="Yuan Z."/>
            <person name="Xu J."/>
            <person name="Wang Y."/>
            <person name="Shen Y."/>
            <person name="Lu W."/>
            <person name="Wang J."/>
            <person name="Liu H."/>
            <person name="Yang J."/>
            <person name="Yang F."/>
            <person name="Zhang X."/>
            <person name="Zhang J."/>
            <person name="Yang G."/>
            <person name="Wu H."/>
            <person name="Qu D."/>
            <person name="Dong J."/>
            <person name="Sun L."/>
            <person name="Xue Y."/>
            <person name="Zhao A."/>
            <person name="Gao Y."/>
            <person name="Zhu J."/>
            <person name="Kan B."/>
            <person name="Ding K."/>
            <person name="Chen S."/>
            <person name="Cheng H."/>
            <person name="Yao Z."/>
            <person name="He B."/>
            <person name="Chen R."/>
            <person name="Ma D."/>
            <person name="Qiang B."/>
            <person name="Wen Y."/>
            <person name="Hou Y."/>
            <person name="Yu J."/>
        </authorList>
    </citation>
    <scope>NUCLEOTIDE SEQUENCE [LARGE SCALE GENOMIC DNA]</scope>
    <source>
        <strain>301 / Serotype 2a</strain>
    </source>
</reference>
<reference key="2">
    <citation type="journal article" date="2003" name="Infect. Immun.">
        <title>Complete genome sequence and comparative genomics of Shigella flexneri serotype 2a strain 2457T.</title>
        <authorList>
            <person name="Wei J."/>
            <person name="Goldberg M.B."/>
            <person name="Burland V."/>
            <person name="Venkatesan M.M."/>
            <person name="Deng W."/>
            <person name="Fournier G."/>
            <person name="Mayhew G.F."/>
            <person name="Plunkett G. III"/>
            <person name="Rose D.J."/>
            <person name="Darling A."/>
            <person name="Mau B."/>
            <person name="Perna N.T."/>
            <person name="Payne S.M."/>
            <person name="Runyen-Janecky L.J."/>
            <person name="Zhou S."/>
            <person name="Schwartz D.C."/>
            <person name="Blattner F.R."/>
        </authorList>
    </citation>
    <scope>NUCLEOTIDE SEQUENCE [LARGE SCALE GENOMIC DNA]</scope>
    <source>
        <strain>ATCC 700930 / 2457T / Serotype 2a</strain>
    </source>
</reference>
<feature type="chain" id="PRO_0000175889" description="Probable transcriptional regulatory protein YeeN">
    <location>
        <begin position="1"/>
        <end position="238"/>
    </location>
</feature>
<proteinExistence type="inferred from homology"/>
<organism>
    <name type="scientific">Shigella flexneri</name>
    <dbReference type="NCBI Taxonomy" id="623"/>
    <lineage>
        <taxon>Bacteria</taxon>
        <taxon>Pseudomonadati</taxon>
        <taxon>Pseudomonadota</taxon>
        <taxon>Gammaproteobacteria</taxon>
        <taxon>Enterobacterales</taxon>
        <taxon>Enterobacteriaceae</taxon>
        <taxon>Shigella</taxon>
    </lineage>
</organism>
<evidence type="ECO:0000255" key="1">
    <source>
        <dbReference type="HAMAP-Rule" id="MF_00918"/>
    </source>
</evidence>
<sequence>MGRKWANIVAKKTAKDGATSKIYAKFGVEIYAAAKQGEPDPELNTSLKFVIERAKQAQVPKHVIDKAIDKAKGGGDETFVQGRYEGFGPNGSMIIAETLTSNVNRTIANVRTIFNKKGGNIGAAGSVSYMFDNTGVIVFKGTDPDHIFEILLEAEVDVRDVTEEEGNIVIYTEPADLHKGIAALKAAGITEFSTTELEMIAQSEVELSPEDLEIFEGLVDALEDDDDVQKVYHNVANL</sequence>
<name>YEEN_SHIFL</name>
<protein>
    <recommendedName>
        <fullName evidence="1">Probable transcriptional regulatory protein YeeN</fullName>
    </recommendedName>
</protein>
<dbReference type="EMBL" id="AE005674">
    <property type="protein sequence ID" value="AAN43596.1"/>
    <property type="molecule type" value="Genomic_DNA"/>
</dbReference>
<dbReference type="EMBL" id="AE014073">
    <property type="protein sequence ID" value="AAP17419.1"/>
    <property type="molecule type" value="Genomic_DNA"/>
</dbReference>
<dbReference type="RefSeq" id="NP_707889.1">
    <property type="nucleotide sequence ID" value="NC_004337.2"/>
</dbReference>
<dbReference type="RefSeq" id="WP_000532920.1">
    <property type="nucleotide sequence ID" value="NZ_WPGW01000252.1"/>
</dbReference>
<dbReference type="SMR" id="Q83KK3"/>
<dbReference type="STRING" id="198214.SF2054"/>
<dbReference type="PaxDb" id="198214-SF2054"/>
<dbReference type="GeneID" id="1025730"/>
<dbReference type="KEGG" id="sfl:SF2054"/>
<dbReference type="KEGG" id="sfx:S2161"/>
<dbReference type="PATRIC" id="fig|198214.7.peg.2458"/>
<dbReference type="HOGENOM" id="CLU_062974_2_0_6"/>
<dbReference type="Proteomes" id="UP000001006">
    <property type="component" value="Chromosome"/>
</dbReference>
<dbReference type="Proteomes" id="UP000002673">
    <property type="component" value="Chromosome"/>
</dbReference>
<dbReference type="GO" id="GO:0005829">
    <property type="term" value="C:cytosol"/>
    <property type="evidence" value="ECO:0007669"/>
    <property type="project" value="TreeGrafter"/>
</dbReference>
<dbReference type="GO" id="GO:0003677">
    <property type="term" value="F:DNA binding"/>
    <property type="evidence" value="ECO:0007669"/>
    <property type="project" value="UniProtKB-UniRule"/>
</dbReference>
<dbReference type="GO" id="GO:0006355">
    <property type="term" value="P:regulation of DNA-templated transcription"/>
    <property type="evidence" value="ECO:0007669"/>
    <property type="project" value="UniProtKB-UniRule"/>
</dbReference>
<dbReference type="FunFam" id="1.10.10.200:FF:000003">
    <property type="entry name" value="Probable transcriptional regulatory protein YeeN"/>
    <property type="match status" value="1"/>
</dbReference>
<dbReference type="FunFam" id="3.30.70.980:FF:000004">
    <property type="entry name" value="Probable transcriptional regulatory protein YeeN"/>
    <property type="match status" value="1"/>
</dbReference>
<dbReference type="Gene3D" id="1.10.10.200">
    <property type="match status" value="1"/>
</dbReference>
<dbReference type="Gene3D" id="3.30.70.980">
    <property type="match status" value="2"/>
</dbReference>
<dbReference type="HAMAP" id="MF_00693">
    <property type="entry name" value="Transcrip_reg_TACO1"/>
    <property type="match status" value="1"/>
</dbReference>
<dbReference type="HAMAP" id="MF_00918">
    <property type="entry name" value="Transcrip_reg_TACO1_YeeN"/>
    <property type="match status" value="1"/>
</dbReference>
<dbReference type="InterPro" id="IPR017856">
    <property type="entry name" value="Integrase-like_N"/>
</dbReference>
<dbReference type="InterPro" id="IPR048300">
    <property type="entry name" value="TACO1_YebC-like_2nd/3rd_dom"/>
</dbReference>
<dbReference type="InterPro" id="IPR049083">
    <property type="entry name" value="TACO1_YebC_N"/>
</dbReference>
<dbReference type="InterPro" id="IPR002876">
    <property type="entry name" value="Transcrip_reg_TACO1-like"/>
</dbReference>
<dbReference type="InterPro" id="IPR026564">
    <property type="entry name" value="Transcrip_reg_TACO1-like_dom3"/>
</dbReference>
<dbReference type="InterPro" id="IPR026562">
    <property type="entry name" value="Transcrip_reg_TACO1_YeeN"/>
</dbReference>
<dbReference type="InterPro" id="IPR029072">
    <property type="entry name" value="YebC-like"/>
</dbReference>
<dbReference type="NCBIfam" id="NF009044">
    <property type="entry name" value="PRK12378.1"/>
    <property type="match status" value="1"/>
</dbReference>
<dbReference type="NCBIfam" id="TIGR01033">
    <property type="entry name" value="YebC/PmpR family DNA-binding transcriptional regulator"/>
    <property type="match status" value="1"/>
</dbReference>
<dbReference type="PANTHER" id="PTHR12532">
    <property type="entry name" value="TRANSLATIONAL ACTIVATOR OF CYTOCHROME C OXIDASE 1"/>
    <property type="match status" value="1"/>
</dbReference>
<dbReference type="PANTHER" id="PTHR12532:SF0">
    <property type="entry name" value="TRANSLATIONAL ACTIVATOR OF CYTOCHROME C OXIDASE 1"/>
    <property type="match status" value="1"/>
</dbReference>
<dbReference type="Pfam" id="PF20772">
    <property type="entry name" value="TACO1_YebC_N"/>
    <property type="match status" value="1"/>
</dbReference>
<dbReference type="Pfam" id="PF01709">
    <property type="entry name" value="Transcrip_reg"/>
    <property type="match status" value="1"/>
</dbReference>
<dbReference type="SUPFAM" id="SSF75625">
    <property type="entry name" value="YebC-like"/>
    <property type="match status" value="1"/>
</dbReference>
<comment type="subcellular location">
    <subcellularLocation>
        <location evidence="1">Cytoplasm</location>
    </subcellularLocation>
</comment>
<comment type="similarity">
    <text evidence="1">Belongs to the TACO1 family. YeeN subfamily.</text>
</comment>
<accession>Q83KK3</accession>
<keyword id="KW-0963">Cytoplasm</keyword>
<keyword id="KW-0238">DNA-binding</keyword>
<keyword id="KW-1185">Reference proteome</keyword>
<keyword id="KW-0804">Transcription</keyword>
<keyword id="KW-0805">Transcription regulation</keyword>